<organism>
    <name type="scientific">Thermodesulfovibrio yellowstonii (strain ATCC 51303 / DSM 11347 / YP87)</name>
    <dbReference type="NCBI Taxonomy" id="289376"/>
    <lineage>
        <taxon>Bacteria</taxon>
        <taxon>Pseudomonadati</taxon>
        <taxon>Nitrospirota</taxon>
        <taxon>Thermodesulfovibrionia</taxon>
        <taxon>Thermodesulfovibrionales</taxon>
        <taxon>Thermodesulfovibrionaceae</taxon>
        <taxon>Thermodesulfovibrio</taxon>
    </lineage>
</organism>
<dbReference type="EC" id="6.3.5.-" evidence="1"/>
<dbReference type="EMBL" id="CP001147">
    <property type="protein sequence ID" value="ACI20246.1"/>
    <property type="molecule type" value="Genomic_DNA"/>
</dbReference>
<dbReference type="RefSeq" id="WP_012544984.1">
    <property type="nucleotide sequence ID" value="NC_011296.1"/>
</dbReference>
<dbReference type="RefSeq" id="YP_002249663.1">
    <property type="nucleotide sequence ID" value="NC_011296.1"/>
</dbReference>
<dbReference type="SMR" id="B5YHS7"/>
<dbReference type="STRING" id="289376.THEYE_A1873"/>
<dbReference type="EnsemblBacteria" id="ACI20246">
    <property type="protein sequence ID" value="ACI20246"/>
    <property type="gene ID" value="THEYE_A1873"/>
</dbReference>
<dbReference type="KEGG" id="tye:THEYE_A1873"/>
<dbReference type="PATRIC" id="fig|289376.4.peg.1829"/>
<dbReference type="eggNOG" id="COG0721">
    <property type="taxonomic scope" value="Bacteria"/>
</dbReference>
<dbReference type="HOGENOM" id="CLU_105899_6_1_0"/>
<dbReference type="InParanoid" id="B5YHS7"/>
<dbReference type="OrthoDB" id="9813938at2"/>
<dbReference type="Proteomes" id="UP000000718">
    <property type="component" value="Chromosome"/>
</dbReference>
<dbReference type="GO" id="GO:0050566">
    <property type="term" value="F:asparaginyl-tRNA synthase (glutamine-hydrolyzing) activity"/>
    <property type="evidence" value="ECO:0007669"/>
    <property type="project" value="RHEA"/>
</dbReference>
<dbReference type="GO" id="GO:0005524">
    <property type="term" value="F:ATP binding"/>
    <property type="evidence" value="ECO:0007669"/>
    <property type="project" value="UniProtKB-KW"/>
</dbReference>
<dbReference type="GO" id="GO:0050567">
    <property type="term" value="F:glutaminyl-tRNA synthase (glutamine-hydrolyzing) activity"/>
    <property type="evidence" value="ECO:0007669"/>
    <property type="project" value="UniProtKB-UniRule"/>
</dbReference>
<dbReference type="GO" id="GO:0070681">
    <property type="term" value="P:glutaminyl-tRNAGln biosynthesis via transamidation"/>
    <property type="evidence" value="ECO:0000318"/>
    <property type="project" value="GO_Central"/>
</dbReference>
<dbReference type="GO" id="GO:0006450">
    <property type="term" value="P:regulation of translational fidelity"/>
    <property type="evidence" value="ECO:0007669"/>
    <property type="project" value="InterPro"/>
</dbReference>
<dbReference type="GO" id="GO:0006412">
    <property type="term" value="P:translation"/>
    <property type="evidence" value="ECO:0007669"/>
    <property type="project" value="UniProtKB-UniRule"/>
</dbReference>
<dbReference type="Gene3D" id="1.10.20.60">
    <property type="entry name" value="Glu-tRNAGln amidotransferase C subunit, N-terminal domain"/>
    <property type="match status" value="1"/>
</dbReference>
<dbReference type="HAMAP" id="MF_00122">
    <property type="entry name" value="GatC"/>
    <property type="match status" value="1"/>
</dbReference>
<dbReference type="InterPro" id="IPR036113">
    <property type="entry name" value="Asp/Glu-ADT_sf_sub_c"/>
</dbReference>
<dbReference type="InterPro" id="IPR003837">
    <property type="entry name" value="GatC"/>
</dbReference>
<dbReference type="NCBIfam" id="TIGR00135">
    <property type="entry name" value="gatC"/>
    <property type="match status" value="1"/>
</dbReference>
<dbReference type="PANTHER" id="PTHR15004">
    <property type="entry name" value="GLUTAMYL-TRNA(GLN) AMIDOTRANSFERASE SUBUNIT C, MITOCHONDRIAL"/>
    <property type="match status" value="1"/>
</dbReference>
<dbReference type="PANTHER" id="PTHR15004:SF0">
    <property type="entry name" value="GLUTAMYL-TRNA(GLN) AMIDOTRANSFERASE SUBUNIT C, MITOCHONDRIAL"/>
    <property type="match status" value="1"/>
</dbReference>
<dbReference type="Pfam" id="PF02686">
    <property type="entry name" value="GatC"/>
    <property type="match status" value="1"/>
</dbReference>
<dbReference type="SUPFAM" id="SSF141000">
    <property type="entry name" value="Glu-tRNAGln amidotransferase C subunit"/>
    <property type="match status" value="1"/>
</dbReference>
<evidence type="ECO:0000255" key="1">
    <source>
        <dbReference type="HAMAP-Rule" id="MF_00122"/>
    </source>
</evidence>
<protein>
    <recommendedName>
        <fullName evidence="1">Aspartyl/glutamyl-tRNA(Asn/Gln) amidotransferase subunit C</fullName>
        <shortName evidence="1">Asp/Glu-ADT subunit C</shortName>
        <ecNumber evidence="1">6.3.5.-</ecNumber>
    </recommendedName>
</protein>
<reference key="1">
    <citation type="submission" date="2008-08" db="EMBL/GenBank/DDBJ databases">
        <title>The complete genome sequence of Thermodesulfovibrio yellowstonii strain ATCC 51303 / DSM 11347 / YP87.</title>
        <authorList>
            <person name="Dodson R.J."/>
            <person name="Durkin A.S."/>
            <person name="Wu M."/>
            <person name="Eisen J."/>
            <person name="Sutton G."/>
        </authorList>
    </citation>
    <scope>NUCLEOTIDE SEQUENCE [LARGE SCALE GENOMIC DNA]</scope>
    <source>
        <strain>ATCC 51303 / DSM 11347 / YP87</strain>
    </source>
</reference>
<accession>B5YHS7</accession>
<proteinExistence type="inferred from homology"/>
<gene>
    <name evidence="1" type="primary">gatC</name>
    <name type="ordered locus">THEYE_A1873</name>
</gene>
<feature type="chain" id="PRO_1000095324" description="Aspartyl/glutamyl-tRNA(Asn/Gln) amidotransferase subunit C">
    <location>
        <begin position="1"/>
        <end position="95"/>
    </location>
</feature>
<keyword id="KW-0067">ATP-binding</keyword>
<keyword id="KW-0436">Ligase</keyword>
<keyword id="KW-0547">Nucleotide-binding</keyword>
<keyword id="KW-0648">Protein biosynthesis</keyword>
<keyword id="KW-1185">Reference proteome</keyword>
<comment type="function">
    <text evidence="1">Allows the formation of correctly charged Asn-tRNA(Asn) or Gln-tRNA(Gln) through the transamidation of misacylated Asp-tRNA(Asn) or Glu-tRNA(Gln) in organisms which lack either or both of asparaginyl-tRNA or glutaminyl-tRNA synthetases. The reaction takes place in the presence of glutamine and ATP through an activated phospho-Asp-tRNA(Asn) or phospho-Glu-tRNA(Gln).</text>
</comment>
<comment type="catalytic activity">
    <reaction evidence="1">
        <text>L-glutamyl-tRNA(Gln) + L-glutamine + ATP + H2O = L-glutaminyl-tRNA(Gln) + L-glutamate + ADP + phosphate + H(+)</text>
        <dbReference type="Rhea" id="RHEA:17521"/>
        <dbReference type="Rhea" id="RHEA-COMP:9681"/>
        <dbReference type="Rhea" id="RHEA-COMP:9684"/>
        <dbReference type="ChEBI" id="CHEBI:15377"/>
        <dbReference type="ChEBI" id="CHEBI:15378"/>
        <dbReference type="ChEBI" id="CHEBI:29985"/>
        <dbReference type="ChEBI" id="CHEBI:30616"/>
        <dbReference type="ChEBI" id="CHEBI:43474"/>
        <dbReference type="ChEBI" id="CHEBI:58359"/>
        <dbReference type="ChEBI" id="CHEBI:78520"/>
        <dbReference type="ChEBI" id="CHEBI:78521"/>
        <dbReference type="ChEBI" id="CHEBI:456216"/>
    </reaction>
</comment>
<comment type="catalytic activity">
    <reaction evidence="1">
        <text>L-aspartyl-tRNA(Asn) + L-glutamine + ATP + H2O = L-asparaginyl-tRNA(Asn) + L-glutamate + ADP + phosphate + 2 H(+)</text>
        <dbReference type="Rhea" id="RHEA:14513"/>
        <dbReference type="Rhea" id="RHEA-COMP:9674"/>
        <dbReference type="Rhea" id="RHEA-COMP:9677"/>
        <dbReference type="ChEBI" id="CHEBI:15377"/>
        <dbReference type="ChEBI" id="CHEBI:15378"/>
        <dbReference type="ChEBI" id="CHEBI:29985"/>
        <dbReference type="ChEBI" id="CHEBI:30616"/>
        <dbReference type="ChEBI" id="CHEBI:43474"/>
        <dbReference type="ChEBI" id="CHEBI:58359"/>
        <dbReference type="ChEBI" id="CHEBI:78515"/>
        <dbReference type="ChEBI" id="CHEBI:78516"/>
        <dbReference type="ChEBI" id="CHEBI:456216"/>
    </reaction>
</comment>
<comment type="subunit">
    <text evidence="1">Heterotrimer of A, B and C subunits.</text>
</comment>
<comment type="similarity">
    <text evidence="1">Belongs to the GatC family.</text>
</comment>
<sequence>MKISKEEVKHIAMLSRLELNEEEIGVYQEQLSRILDYIEKLNEIDTTLVEPTSHVIELKNVFRDDNVKGSISRDEALKNAPDQTDKFFRVPKIIE</sequence>
<name>GATC_THEYD</name>